<feature type="initiator methionine" description="Removed" evidence="1">
    <location>
        <position position="1"/>
    </location>
</feature>
<feature type="chain" id="PRO_0000094323" description="Elongation factor P">
    <location>
        <begin position="2"/>
        <end position="188"/>
    </location>
</feature>
<feature type="modified residue" description="N6-(3,6-diaminohexanoyl)-5-hydroxylysine" evidence="2 3">
    <location>
        <position position="34"/>
    </location>
</feature>
<protein>
    <recommendedName>
        <fullName evidence="2">Elongation factor P</fullName>
        <shortName evidence="2">EF-P</shortName>
    </recommendedName>
</protein>
<comment type="function">
    <text evidence="2">Involved in peptide bond synthesis. Alleviates ribosome stalling that occurs when 3 or more consecutive Pro residues or the sequence PPG is present in a protein, possibly by augmenting the peptidyl transferase activity of the ribosome. Modification of Lys-34 is required for alleviation.</text>
</comment>
<comment type="pathway">
    <text evidence="2">Protein biosynthesis; polypeptide chain elongation.</text>
</comment>
<comment type="subcellular location">
    <subcellularLocation>
        <location evidence="2">Cytoplasm</location>
    </subcellularLocation>
</comment>
<comment type="PTM">
    <text evidence="3">Is beta-lysylated on the epsilon-amino group of Lys-34 by the combined action of EpmA and EpmB, and then hydroxylated on the C5 position of the same residue by EpmC. Lysylation is critical for the stimulatory effect of EF-P on peptide-bond formation. The lysylation moiety would extend toward the peptidyltransferase center and stabilize the terminal 3-CCA end of the tRNA. The hydroxylation of the C5 position on Lys-34 would allow additional potential stabilizing hydrogen-bond interactions with the P-tRNA (Probable) (PubMed:20670890).</text>
</comment>
<comment type="disruption phenotype">
    <text evidence="4">Cells lacking EF-P display highly pleiotropic phenotypes similar to those lacking EmpA or EmpB. They exhibit reduced growth rates, and they display increased susceptibility to hypoosmotic conditions, antibiotics, and detergents and enhanced resistance to the compound S-nitrosoglutathione. The susceptibility phenotypes are largely explained by the enhanced membrane permeability of the efp mutant. Analysis of the membrane proteomes of wild-type and efp mutant strains reveals few changes, including the prominent overexpression of a single porin, KdgM (STM1131), in the efp mutant outer membrane.</text>
</comment>
<comment type="similarity">
    <text evidence="2">Belongs to the elongation factor P family.</text>
</comment>
<accession>P64036</accession>
<accession>Q8XFX2</accession>
<proteinExistence type="evidence at protein level"/>
<reference key="1">
    <citation type="journal article" date="2001" name="Nature">
        <title>Complete genome sequence of Salmonella enterica serovar Typhimurium LT2.</title>
        <authorList>
            <person name="McClelland M."/>
            <person name="Sanderson K.E."/>
            <person name="Spieth J."/>
            <person name="Clifton S.W."/>
            <person name="Latreille P."/>
            <person name="Courtney L."/>
            <person name="Porwollik S."/>
            <person name="Ali J."/>
            <person name="Dante M."/>
            <person name="Du F."/>
            <person name="Hou S."/>
            <person name="Layman D."/>
            <person name="Leonard S."/>
            <person name="Nguyen C."/>
            <person name="Scott K."/>
            <person name="Holmes A."/>
            <person name="Grewal N."/>
            <person name="Mulvaney E."/>
            <person name="Ryan E."/>
            <person name="Sun H."/>
            <person name="Florea L."/>
            <person name="Miller W."/>
            <person name="Stoneking T."/>
            <person name="Nhan M."/>
            <person name="Waterston R."/>
            <person name="Wilson R.K."/>
        </authorList>
    </citation>
    <scope>NUCLEOTIDE SEQUENCE [LARGE SCALE GENOMIC DNA]</scope>
    <source>
        <strain>LT2 / SGSC1412 / ATCC 700720</strain>
    </source>
</reference>
<reference key="2">
    <citation type="journal article" date="2010" name="Mol. Cell">
        <title>PoxA, YjeK, and elongation factor P coordinately modulate virulence and drug resistance in Salmonella enterica.</title>
        <authorList>
            <person name="Navarre W.W."/>
            <person name="Zou S.B."/>
            <person name="Roy H."/>
            <person name="Xie J.L."/>
            <person name="Savchenko A."/>
            <person name="Singer A."/>
            <person name="Edvokimova E."/>
            <person name="Prost L.R."/>
            <person name="Kumar R."/>
            <person name="Ibba M."/>
            <person name="Fang F.C."/>
        </authorList>
    </citation>
    <scope>BETA-LYSYLATION AT LYS-34 BY EPMA</scope>
    <scope>HYDROXYLATION AT LYS-34</scope>
</reference>
<reference key="3">
    <citation type="journal article" date="2012" name="J. Bacteriol.">
        <title>Loss of elongation factor P disrupts bacterial outer membrane integrity.</title>
        <authorList>
            <person name="Zou S.B."/>
            <person name="Hersch S.J."/>
            <person name="Roy H."/>
            <person name="Wiggers J.B."/>
            <person name="Leung A.S."/>
            <person name="Buranyi S."/>
            <person name="Xie J.L."/>
            <person name="Dare K."/>
            <person name="Ibba M."/>
            <person name="Navarre W.W."/>
        </authorList>
    </citation>
    <scope>DISRUPTION PHENOTYPE</scope>
    <scope>ROLE IN MEMBRANE INTEGRITY</scope>
    <source>
        <strain>14028s / SGSC 2262</strain>
    </source>
</reference>
<name>EFP_SALTY</name>
<gene>
    <name evidence="2" type="primary">efp</name>
    <name type="ordered locus">STM4334</name>
</gene>
<dbReference type="EMBL" id="AE006468">
    <property type="protein sequence ID" value="AAL23157.1"/>
    <property type="molecule type" value="Genomic_DNA"/>
</dbReference>
<dbReference type="RefSeq" id="NP_463198.1">
    <property type="nucleotide sequence ID" value="NC_003197.2"/>
</dbReference>
<dbReference type="RefSeq" id="WP_000257282.1">
    <property type="nucleotide sequence ID" value="NC_003197.2"/>
</dbReference>
<dbReference type="SMR" id="P64036"/>
<dbReference type="STRING" id="99287.STM4334"/>
<dbReference type="PaxDb" id="99287-STM4334"/>
<dbReference type="GeneID" id="1255860"/>
<dbReference type="GeneID" id="66758562"/>
<dbReference type="KEGG" id="stm:STM4334"/>
<dbReference type="PATRIC" id="fig|99287.12.peg.4560"/>
<dbReference type="HOGENOM" id="CLU_074944_0_0_6"/>
<dbReference type="OMA" id="WSVVEFQ"/>
<dbReference type="PhylomeDB" id="P64036"/>
<dbReference type="BioCyc" id="SENT99287:STM4334-MONOMER"/>
<dbReference type="UniPathway" id="UPA00345"/>
<dbReference type="PHI-base" id="PHI:6420"/>
<dbReference type="Proteomes" id="UP000001014">
    <property type="component" value="Chromosome"/>
</dbReference>
<dbReference type="GO" id="GO:0005737">
    <property type="term" value="C:cytoplasm"/>
    <property type="evidence" value="ECO:0000318"/>
    <property type="project" value="GO_Central"/>
</dbReference>
<dbReference type="GO" id="GO:0005829">
    <property type="term" value="C:cytosol"/>
    <property type="evidence" value="ECO:0007669"/>
    <property type="project" value="UniProtKB-ARBA"/>
</dbReference>
<dbReference type="GO" id="GO:0003746">
    <property type="term" value="F:translation elongation factor activity"/>
    <property type="evidence" value="ECO:0000318"/>
    <property type="project" value="GO_Central"/>
</dbReference>
<dbReference type="GO" id="GO:0043043">
    <property type="term" value="P:peptide biosynthetic process"/>
    <property type="evidence" value="ECO:0007669"/>
    <property type="project" value="InterPro"/>
</dbReference>
<dbReference type="CDD" id="cd04470">
    <property type="entry name" value="S1_EF-P_repeat_1"/>
    <property type="match status" value="1"/>
</dbReference>
<dbReference type="CDD" id="cd05794">
    <property type="entry name" value="S1_EF-P_repeat_2"/>
    <property type="match status" value="1"/>
</dbReference>
<dbReference type="FunFam" id="2.30.30.30:FF:000003">
    <property type="entry name" value="Elongation factor P"/>
    <property type="match status" value="1"/>
</dbReference>
<dbReference type="FunFam" id="2.40.50.140:FF:000004">
    <property type="entry name" value="Elongation factor P"/>
    <property type="match status" value="1"/>
</dbReference>
<dbReference type="FunFam" id="2.40.50.140:FF:000009">
    <property type="entry name" value="Elongation factor P"/>
    <property type="match status" value="1"/>
</dbReference>
<dbReference type="Gene3D" id="2.30.30.30">
    <property type="match status" value="1"/>
</dbReference>
<dbReference type="Gene3D" id="2.40.50.140">
    <property type="entry name" value="Nucleic acid-binding proteins"/>
    <property type="match status" value="2"/>
</dbReference>
<dbReference type="HAMAP" id="MF_00141">
    <property type="entry name" value="EF_P"/>
    <property type="match status" value="1"/>
</dbReference>
<dbReference type="InterPro" id="IPR015365">
    <property type="entry name" value="Elong-fact-P_C"/>
</dbReference>
<dbReference type="InterPro" id="IPR012340">
    <property type="entry name" value="NA-bd_OB-fold"/>
</dbReference>
<dbReference type="InterPro" id="IPR014722">
    <property type="entry name" value="Rib_uL2_dom2"/>
</dbReference>
<dbReference type="InterPro" id="IPR020599">
    <property type="entry name" value="Transl_elong_fac_P/YeiP"/>
</dbReference>
<dbReference type="InterPro" id="IPR013185">
    <property type="entry name" value="Transl_elong_KOW-like"/>
</dbReference>
<dbReference type="InterPro" id="IPR001059">
    <property type="entry name" value="Transl_elong_P/YeiP_cen"/>
</dbReference>
<dbReference type="InterPro" id="IPR013852">
    <property type="entry name" value="Transl_elong_P/YeiP_CS"/>
</dbReference>
<dbReference type="InterPro" id="IPR011768">
    <property type="entry name" value="Transl_elongation_fac_P"/>
</dbReference>
<dbReference type="InterPro" id="IPR008991">
    <property type="entry name" value="Translation_prot_SH3-like_sf"/>
</dbReference>
<dbReference type="NCBIfam" id="TIGR00038">
    <property type="entry name" value="efp"/>
    <property type="match status" value="1"/>
</dbReference>
<dbReference type="NCBIfam" id="NF001810">
    <property type="entry name" value="PRK00529.1"/>
    <property type="match status" value="1"/>
</dbReference>
<dbReference type="PANTHER" id="PTHR30053">
    <property type="entry name" value="ELONGATION FACTOR P"/>
    <property type="match status" value="1"/>
</dbReference>
<dbReference type="PANTHER" id="PTHR30053:SF12">
    <property type="entry name" value="ELONGATION FACTOR P (EF-P) FAMILY PROTEIN"/>
    <property type="match status" value="1"/>
</dbReference>
<dbReference type="Pfam" id="PF01132">
    <property type="entry name" value="EFP"/>
    <property type="match status" value="1"/>
</dbReference>
<dbReference type="Pfam" id="PF08207">
    <property type="entry name" value="EFP_N"/>
    <property type="match status" value="1"/>
</dbReference>
<dbReference type="Pfam" id="PF09285">
    <property type="entry name" value="Elong-fact-P_C"/>
    <property type="match status" value="1"/>
</dbReference>
<dbReference type="PIRSF" id="PIRSF005901">
    <property type="entry name" value="EF-P"/>
    <property type="match status" value="1"/>
</dbReference>
<dbReference type="SMART" id="SM01185">
    <property type="entry name" value="EFP"/>
    <property type="match status" value="1"/>
</dbReference>
<dbReference type="SMART" id="SM00841">
    <property type="entry name" value="Elong-fact-P_C"/>
    <property type="match status" value="1"/>
</dbReference>
<dbReference type="SUPFAM" id="SSF50249">
    <property type="entry name" value="Nucleic acid-binding proteins"/>
    <property type="match status" value="2"/>
</dbReference>
<dbReference type="SUPFAM" id="SSF50104">
    <property type="entry name" value="Translation proteins SH3-like domain"/>
    <property type="match status" value="1"/>
</dbReference>
<dbReference type="PROSITE" id="PS01275">
    <property type="entry name" value="EFP"/>
    <property type="match status" value="1"/>
</dbReference>
<organism>
    <name type="scientific">Salmonella typhimurium (strain LT2 / SGSC1412 / ATCC 700720)</name>
    <dbReference type="NCBI Taxonomy" id="99287"/>
    <lineage>
        <taxon>Bacteria</taxon>
        <taxon>Pseudomonadati</taxon>
        <taxon>Pseudomonadota</taxon>
        <taxon>Gammaproteobacteria</taxon>
        <taxon>Enterobacterales</taxon>
        <taxon>Enterobacteriaceae</taxon>
        <taxon>Salmonella</taxon>
    </lineage>
</organism>
<keyword id="KW-0963">Cytoplasm</keyword>
<keyword id="KW-0251">Elongation factor</keyword>
<keyword id="KW-0379">Hydroxylation</keyword>
<keyword id="KW-0648">Protein biosynthesis</keyword>
<keyword id="KW-1185">Reference proteome</keyword>
<sequence length="188" mass="20623">MATYYSNDFRSGLKIMLDGEPYAVESSEFVKPGKGQAFARVKLRRLLTGTRVEKTFKSTDSAEGADVVDMNLTYLYNDGEFWHFMNNETFEQLSADAKAIGDNAKWLLDQAECIVTLWNGQPISVTPPNFVELEIVDTDPGLKGDTAGTGGKPATLSTGAVVKVPLFVQIGEVIKVDTRSGEYVSRVK</sequence>
<evidence type="ECO:0000250" key="1"/>
<evidence type="ECO:0000255" key="2">
    <source>
        <dbReference type="HAMAP-Rule" id="MF_00141"/>
    </source>
</evidence>
<evidence type="ECO:0000269" key="3">
    <source>
    </source>
</evidence>
<evidence type="ECO:0000269" key="4">
    <source>
    </source>
</evidence>